<comment type="function">
    <text evidence="1 2">Sperm protein required for fusion of sperm with the egg membrane during fertilization (By similarity). May regulate the expression of sperm surface protein DCST2 (By similarity).</text>
</comment>
<comment type="subunit">
    <text evidence="8">Forms a complex with IZUMO1 and TMEM81 on spermatocyte cell membrane required for fertilization.</text>
</comment>
<comment type="interaction">
    <interactant intactId="EBI-10176265">
        <id>W5XKT8</id>
    </interactant>
    <interactant intactId="EBI-744695">
        <id>Q8N9N5</id>
        <label>BANP</label>
    </interactant>
    <organismsDiffer>false</organismsDiffer>
    <experiments>3</experiments>
</comment>
<comment type="subcellular location">
    <subcellularLocation>
        <location evidence="6">Cytoplasmic vesicle</location>
        <location evidence="6">Secretory vesicle</location>
        <location evidence="6">Acrosome membrane</location>
        <topology evidence="3">Single-pass type I membrane protein</topology>
    </subcellularLocation>
</comment>
<comment type="alternative products">
    <event type="alternative splicing"/>
    <isoform>
        <id>W5XKT8-1</id>
        <name>1</name>
        <sequence type="displayed"/>
    </isoform>
    <isoform>
        <id>W5XKT8-2</id>
        <name>2</name>
        <sequence type="described" ref="VSP_057868 VSP_057871"/>
    </isoform>
    <isoform>
        <id>W5XKT8-3</id>
        <name>3</name>
        <sequence type="described" ref="VSP_057869 VSP_057870"/>
    </isoform>
</comment>
<comment type="tissue specificity">
    <text evidence="5 6">Detected at the sperm head, equatorial region, neck and midpiece (at protein level) (PubMed:32210282). Expressed in testis (PubMed:24275887).</text>
</comment>
<comment type="domain">
    <text evidence="7">The extracellular domain shows strong structural similarity with IZUMO1 but does not interact with the IZUMO1 receptor IZUMO1R/JUNO.</text>
</comment>
<comment type="miscellaneous">
    <molecule>Isoform 2</molecule>
    <text evidence="11">Due to intron retention.</text>
</comment>
<comment type="miscellaneous">
    <molecule>Isoform 3</molecule>
    <text evidence="11">Due to intron retention.</text>
</comment>
<comment type="similarity">
    <text evidence="11">Belongs to the SPACA6 family.</text>
</comment>
<comment type="caution">
    <text>Was originally thought to be a non protein-coding gene.</text>
</comment>
<dbReference type="EMBL" id="KF751883">
    <property type="protein sequence ID" value="AHI16960.1"/>
    <property type="molecule type" value="mRNA"/>
</dbReference>
<dbReference type="EMBL" id="AY358799">
    <property type="protein sequence ID" value="AAQ89159.1"/>
    <property type="molecule type" value="mRNA"/>
</dbReference>
<dbReference type="EMBL" id="AC018755">
    <property type="status" value="NOT_ANNOTATED_CDS"/>
    <property type="molecule type" value="Genomic_DNA"/>
</dbReference>
<dbReference type="EMBL" id="CH471135">
    <property type="protein sequence ID" value="EAW72036.1"/>
    <property type="molecule type" value="Genomic_DNA"/>
</dbReference>
<dbReference type="EMBL" id="CH471135">
    <property type="protein sequence ID" value="EAW72037.1"/>
    <property type="molecule type" value="Genomic_DNA"/>
</dbReference>
<dbReference type="EMBL" id="BC104208">
    <property type="protein sequence ID" value="AAI04209.1"/>
    <property type="molecule type" value="mRNA"/>
</dbReference>
<dbReference type="EMBL" id="BC041134">
    <property type="status" value="NOT_ANNOTATED_CDS"/>
    <property type="molecule type" value="mRNA"/>
</dbReference>
<dbReference type="CCDS" id="CCDS82386.1">
    <molecule id="W5XKT8-1"/>
</dbReference>
<dbReference type="RefSeq" id="NP_001303901.1">
    <molecule id="W5XKT8-1"/>
    <property type="nucleotide sequence ID" value="NM_001316972.2"/>
</dbReference>
<dbReference type="RefSeq" id="XP_016881788.1">
    <molecule id="W5XKT8-1"/>
    <property type="nucleotide sequence ID" value="XM_017026299.3"/>
</dbReference>
<dbReference type="RefSeq" id="XP_054175823.1">
    <molecule id="W5XKT8-1"/>
    <property type="nucleotide sequence ID" value="XM_054319848.1"/>
</dbReference>
<dbReference type="PDB" id="7TA2">
    <property type="method" value="X-ray"/>
    <property type="resolution" value="2.25 A"/>
    <property type="chains" value="A=27-246"/>
</dbReference>
<dbReference type="PDBsum" id="7TA2"/>
<dbReference type="SASBDB" id="W5XKT8"/>
<dbReference type="SMR" id="W5XKT8"/>
<dbReference type="FunCoup" id="W5XKT8">
    <property type="interactions" value="24"/>
</dbReference>
<dbReference type="IntAct" id="W5XKT8">
    <property type="interactions" value="1"/>
</dbReference>
<dbReference type="STRING" id="9606.ENSP00000490829"/>
<dbReference type="GlyCosmos" id="W5XKT8">
    <property type="glycosylation" value="1 site, No reported glycans"/>
</dbReference>
<dbReference type="GlyGen" id="W5XKT8">
    <property type="glycosylation" value="1 site"/>
</dbReference>
<dbReference type="PhosphoSitePlus" id="W5XKT8"/>
<dbReference type="BioMuta" id="SPACA6"/>
<dbReference type="jPOST" id="W5XKT8"/>
<dbReference type="MassIVE" id="W5XKT8"/>
<dbReference type="PeptideAtlas" id="W5XKT8"/>
<dbReference type="DNASU" id="147650"/>
<dbReference type="Ensembl" id="ENST00000637797.2">
    <molecule id="W5XKT8-1"/>
    <property type="protein sequence ID" value="ENSP00000490829.1"/>
    <property type="gene ID" value="ENSG00000182310.16"/>
</dbReference>
<dbReference type="GeneID" id="147650"/>
<dbReference type="KEGG" id="hsa:147650"/>
<dbReference type="MANE-Select" id="ENST00000637797.2">
    <property type="protein sequence ID" value="ENSP00000490829.1"/>
    <property type="RefSeq nucleotide sequence ID" value="NM_001316972.2"/>
    <property type="RefSeq protein sequence ID" value="NP_001303901.1"/>
</dbReference>
<dbReference type="AGR" id="HGNC:27113"/>
<dbReference type="CTD" id="147650"/>
<dbReference type="DisGeNET" id="147650"/>
<dbReference type="GeneCards" id="SPACA6"/>
<dbReference type="HGNC" id="HGNC:27113">
    <property type="gene designation" value="SPACA6"/>
</dbReference>
<dbReference type="HPA" id="ENSG00000182310">
    <property type="expression patterns" value="Tissue enriched (testis)"/>
</dbReference>
<dbReference type="MIM" id="618945">
    <property type="type" value="gene"/>
</dbReference>
<dbReference type="neXtProt" id="NX_W5XKT8"/>
<dbReference type="OpenTargets" id="ENSG00000182310"/>
<dbReference type="PharmGKB" id="PA145147917"/>
<dbReference type="VEuPathDB" id="HostDB:ENSG00000182310"/>
<dbReference type="GeneTree" id="ENSGT00390000009010"/>
<dbReference type="InParanoid" id="W5XKT8"/>
<dbReference type="OMA" id="TQDQSYF"/>
<dbReference type="OrthoDB" id="8960581at2759"/>
<dbReference type="PAN-GO" id="W5XKT8">
    <property type="GO annotations" value="1 GO annotation based on evolutionary models"/>
</dbReference>
<dbReference type="PathwayCommons" id="W5XKT8"/>
<dbReference type="SignaLink" id="W5XKT8"/>
<dbReference type="BioGRID-ORCS" id="147650">
    <property type="hits" value="0 hits in 25 CRISPR screens"/>
</dbReference>
<dbReference type="ChiTaRS" id="SPACA6">
    <property type="organism name" value="human"/>
</dbReference>
<dbReference type="GenomeRNAi" id="147650"/>
<dbReference type="Pharos" id="W5XKT8">
    <property type="development level" value="Tdark"/>
</dbReference>
<dbReference type="PRO" id="PR:W5XKT8"/>
<dbReference type="Proteomes" id="UP000005640">
    <property type="component" value="Chromosome 19"/>
</dbReference>
<dbReference type="RNAct" id="W5XKT8">
    <property type="molecule type" value="protein"/>
</dbReference>
<dbReference type="Bgee" id="ENSG00000182310">
    <property type="expression patterns" value="Expressed in adenohypophysis and 96 other cell types or tissues"/>
</dbReference>
<dbReference type="ExpressionAtlas" id="W5XKT8">
    <property type="expression patterns" value="baseline and differential"/>
</dbReference>
<dbReference type="GO" id="GO:0002080">
    <property type="term" value="C:acrosomal membrane"/>
    <property type="evidence" value="ECO:0007669"/>
    <property type="project" value="UniProtKB-SubCell"/>
</dbReference>
<dbReference type="GO" id="GO:0005886">
    <property type="term" value="C:plasma membrane"/>
    <property type="evidence" value="ECO:0000314"/>
    <property type="project" value="UniProt"/>
</dbReference>
<dbReference type="GO" id="GO:0030674">
    <property type="term" value="F:protein-macromolecule adaptor activity"/>
    <property type="evidence" value="ECO:0000314"/>
    <property type="project" value="UniProt"/>
</dbReference>
<dbReference type="GO" id="GO:0007342">
    <property type="term" value="P:fusion of sperm to egg plasma membrane involved in single fertilization"/>
    <property type="evidence" value="ECO:0000250"/>
    <property type="project" value="UniProtKB"/>
</dbReference>
<dbReference type="GO" id="GO:0035036">
    <property type="term" value="P:sperm-egg recognition"/>
    <property type="evidence" value="ECO:0000314"/>
    <property type="project" value="UniProtKB"/>
</dbReference>
<dbReference type="FunFam" id="2.60.40.10:FF:001731">
    <property type="entry name" value="Sperm acrosome associated 6"/>
    <property type="match status" value="1"/>
</dbReference>
<dbReference type="Gene3D" id="2.60.40.10">
    <property type="entry name" value="Immunoglobulins"/>
    <property type="match status" value="1"/>
</dbReference>
<dbReference type="InterPro" id="IPR007110">
    <property type="entry name" value="Ig-like_dom"/>
</dbReference>
<dbReference type="InterPro" id="IPR036179">
    <property type="entry name" value="Ig-like_dom_sf"/>
</dbReference>
<dbReference type="InterPro" id="IPR013783">
    <property type="entry name" value="Ig-like_fold"/>
</dbReference>
<dbReference type="InterPro" id="IPR034549">
    <property type="entry name" value="SPACA6"/>
</dbReference>
<dbReference type="PANTHER" id="PTHR37366">
    <property type="entry name" value="SPERM ACROSOME MEMBRANE-ASSOCIATED PROTEIN 6"/>
    <property type="match status" value="1"/>
</dbReference>
<dbReference type="PANTHER" id="PTHR37366:SF1">
    <property type="entry name" value="SPERM ACROSOME MEMBRANE-ASSOCIATED PROTEIN 6"/>
    <property type="match status" value="1"/>
</dbReference>
<dbReference type="SUPFAM" id="SSF48726">
    <property type="entry name" value="Immunoglobulin"/>
    <property type="match status" value="1"/>
</dbReference>
<dbReference type="PROSITE" id="PS50835">
    <property type="entry name" value="IG_LIKE"/>
    <property type="match status" value="1"/>
</dbReference>
<proteinExistence type="evidence at protein level"/>
<keyword id="KW-0002">3D-structure</keyword>
<keyword id="KW-0025">Alternative splicing</keyword>
<keyword id="KW-0968">Cytoplasmic vesicle</keyword>
<keyword id="KW-1015">Disulfide bond</keyword>
<keyword id="KW-0278">Fertilization</keyword>
<keyword id="KW-0325">Glycoprotein</keyword>
<keyword id="KW-0393">Immunoglobulin domain</keyword>
<keyword id="KW-0472">Membrane</keyword>
<keyword id="KW-1267">Proteomics identification</keyword>
<keyword id="KW-1185">Reference proteome</keyword>
<keyword id="KW-0732">Signal</keyword>
<keyword id="KW-0812">Transmembrane</keyword>
<keyword id="KW-1133">Transmembrane helix</keyword>
<name>SACA6_HUMAN</name>
<evidence type="ECO:0000250" key="1">
    <source>
        <dbReference type="UniProtKB" id="A0A8M9PDM1"/>
    </source>
</evidence>
<evidence type="ECO:0000250" key="2">
    <source>
        <dbReference type="UniProtKB" id="E9Q8Q8"/>
    </source>
</evidence>
<evidence type="ECO:0000255" key="3"/>
<evidence type="ECO:0000255" key="4">
    <source>
        <dbReference type="PROSITE-ProRule" id="PRU00114"/>
    </source>
</evidence>
<evidence type="ECO:0000269" key="5">
    <source>
    </source>
</evidence>
<evidence type="ECO:0000269" key="6">
    <source>
    </source>
</evidence>
<evidence type="ECO:0000269" key="7">
    <source>
    </source>
</evidence>
<evidence type="ECO:0000269" key="8">
    <source>
    </source>
</evidence>
<evidence type="ECO:0000303" key="9">
    <source>
    </source>
</evidence>
<evidence type="ECO:0000303" key="10">
    <source>
    </source>
</evidence>
<evidence type="ECO:0000305" key="11"/>
<evidence type="ECO:0000305" key="12">
    <source>
    </source>
</evidence>
<evidence type="ECO:0000312" key="13">
    <source>
        <dbReference type="EMBL" id="AHI16960.1"/>
    </source>
</evidence>
<evidence type="ECO:0000312" key="14">
    <source>
        <dbReference type="HGNC" id="HGNC:27113"/>
    </source>
</evidence>
<evidence type="ECO:0007744" key="15">
    <source>
        <dbReference type="PDB" id="7TA2"/>
    </source>
</evidence>
<evidence type="ECO:0007829" key="16">
    <source>
        <dbReference type="PDB" id="7TA2"/>
    </source>
</evidence>
<organism>
    <name type="scientific">Homo sapiens</name>
    <name type="common">Human</name>
    <dbReference type="NCBI Taxonomy" id="9606"/>
    <lineage>
        <taxon>Eukaryota</taxon>
        <taxon>Metazoa</taxon>
        <taxon>Chordata</taxon>
        <taxon>Craniata</taxon>
        <taxon>Vertebrata</taxon>
        <taxon>Euteleostomi</taxon>
        <taxon>Mammalia</taxon>
        <taxon>Eutheria</taxon>
        <taxon>Euarchontoglires</taxon>
        <taxon>Primates</taxon>
        <taxon>Haplorrhini</taxon>
        <taxon>Catarrhini</taxon>
        <taxon>Hominidae</taxon>
        <taxon>Homo</taxon>
    </lineage>
</organism>
<protein>
    <recommendedName>
        <fullName evidence="10">Sperm acrosome membrane-associated protein 6</fullName>
    </recommendedName>
    <alternativeName>
        <fullName evidence="13">BACHELOR-like protein</fullName>
    </alternativeName>
</protein>
<sequence length="324" mass="36333">MALLALASAVPSALLALAVFRVPAWACLLCFTTYSERLRICQMFVGMRSPKLEECEEAFTAAFQGLSDTEINYDERSHLHDTFTQMTHALQELAAAQGSFEVAFPDAAEKMKKVITQLKEAQACIPPCGLQEFARRFLCSGCYSRVCDLPLDCPVQDVTVTRGDQAMFSCIVNFQLPKEEITYSWKFAGGGLRTQDLSYFRDMPRAEGYLARIRPAQLTHRGTFSCVIKQDQRPLARLYFFLNVTGPPPRAETELQASFREVLRWAPRDAELIEPWRPSLGELLARPEALTPSNLFLLAVLGALASASATVLAWMFFRWYCSGN</sequence>
<accession>W5XKT8</accession>
<accession>C0H5Y6</accession>
<accession>Q6UWG3</accession>
<feature type="signal peptide" evidence="3">
    <location>
        <begin position="1"/>
        <end position="26"/>
    </location>
</feature>
<feature type="chain" id="PRO_0000434003" description="Sperm acrosome membrane-associated protein 6" evidence="3">
    <location>
        <begin position="27"/>
        <end position="324"/>
    </location>
</feature>
<feature type="topological domain" description="Extracellular" evidence="3">
    <location>
        <begin position="27"/>
        <end position="295"/>
    </location>
</feature>
<feature type="transmembrane region" description="Helical" evidence="3">
    <location>
        <begin position="296"/>
        <end position="316"/>
    </location>
</feature>
<feature type="topological domain" description="Cytoplasmic" evidence="3">
    <location>
        <begin position="317"/>
        <end position="324"/>
    </location>
</feature>
<feature type="domain" description="Ig-like" evidence="7">
    <location>
        <begin position="150"/>
        <end position="236"/>
    </location>
</feature>
<feature type="short sequence motif" description="CXXC motif" evidence="12">
    <location>
        <begin position="27"/>
        <end position="30"/>
    </location>
</feature>
<feature type="short sequence motif" description="CXXC motif" evidence="12">
    <location>
        <begin position="139"/>
        <end position="142"/>
    </location>
</feature>
<feature type="glycosylation site" description="N-linked (GlcNAc...) asparagine" evidence="3">
    <location>
        <position position="243"/>
    </location>
</feature>
<feature type="disulfide bond" evidence="7 15">
    <location>
        <begin position="27"/>
        <end position="139"/>
    </location>
</feature>
<feature type="disulfide bond" evidence="7 15">
    <location>
        <begin position="30"/>
        <end position="142"/>
    </location>
</feature>
<feature type="disulfide bond" evidence="7 15">
    <location>
        <begin position="41"/>
        <end position="55"/>
    </location>
</feature>
<feature type="disulfide bond" evidence="7 15">
    <location>
        <begin position="124"/>
        <end position="147"/>
    </location>
</feature>
<feature type="disulfide bond" evidence="7 15">
    <location>
        <begin position="128"/>
        <end position="153"/>
    </location>
</feature>
<feature type="disulfide bond" evidence="4 7 15">
    <location>
        <begin position="170"/>
        <end position="226"/>
    </location>
</feature>
<feature type="splice variant" id="VSP_057868" description="In isoform 2.">
    <original>NYDERSHLHDTFTQMTHALQELAAAQGSFEVAFPDAAEKMKKVITQLKEAQACIPPCGLQEFARRFLCSGCYSRVCDLPLDCPVQDVTVTRGDQAMFSCIVNFQLPKEEITYSWKFAGGGLRTQDLSYFRDMPRAEGYLARIRPAQLTHRGTFSCVIKQDQRPLARLYFFLN</original>
    <variation>SEETIHTSSVSWGRCRGRAGEAQRVRLRDRQRETVRGERLKDHENNRDLGTERHRQGKTAGQRLREGRMESQRGEDGDSERGEDGDSEREEDGDSEGKMETQEYGESERGGWTLRGGWRVRRMETHRKGRMESQERLETGEGIETQKGEDGDSEGGRWRLKEDGNPERGGQR</variation>
    <location>
        <begin position="72"/>
        <end position="243"/>
    </location>
</feature>
<feature type="splice variant" id="VSP_057869" description="In isoform 3.">
    <original>NYDERSHLHDTFTQMTHALQELAAAQGSFEVAFPDAAEKMKKVITQLKEAQACIPPCGLQEFARRFLCSGCYSRVCDLPLDCPVQDVTVTRGDQAMFSCIVNFQLPKEEITYSWKFAGGGLRTQDLSYFRDMPRAEGYLA</original>
    <variation>SEETIHTSSVSWGRCRGRAGEAQRVRLRDRQRETVRGERLKDHENNRDLGTERHRQGKTAGQRLREGRMESQRGEDGDSERGRMETQRERKMETRKDGDSGVWRVREGRMDTREDGESGGWRLIERGGWRVRRGWRLERE</variation>
    <location>
        <begin position="72"/>
        <end position="211"/>
    </location>
</feature>
<feature type="splice variant" id="VSP_057870" description="In isoform 3.">
    <location>
        <begin position="212"/>
        <end position="324"/>
    </location>
</feature>
<feature type="splice variant" id="VSP_057871" description="In isoform 2.">
    <location>
        <begin position="244"/>
        <end position="324"/>
    </location>
</feature>
<feature type="sequence conflict" description="In Ref. 1; AHI16960." evidence="11" ref="1">
    <original>T</original>
    <variation>A</variation>
    <location>
        <position position="32"/>
    </location>
</feature>
<feature type="sequence conflict" description="In Ref. 1; AHI16960." evidence="11" ref="1">
    <original>M</original>
    <variation>V</variation>
    <location>
        <position position="203"/>
    </location>
</feature>
<feature type="helix" evidence="16">
    <location>
        <begin position="28"/>
        <end position="31"/>
    </location>
</feature>
<feature type="helix" evidence="16">
    <location>
        <begin position="34"/>
        <end position="45"/>
    </location>
</feature>
<feature type="helix" evidence="16">
    <location>
        <begin position="52"/>
        <end position="62"/>
    </location>
</feature>
<feature type="helix" evidence="16">
    <location>
        <begin position="63"/>
        <end position="68"/>
    </location>
</feature>
<feature type="strand" evidence="16">
    <location>
        <begin position="70"/>
        <end position="72"/>
    </location>
</feature>
<feature type="helix" evidence="16">
    <location>
        <begin position="73"/>
        <end position="75"/>
    </location>
</feature>
<feature type="helix" evidence="16">
    <location>
        <begin position="76"/>
        <end position="95"/>
    </location>
</feature>
<feature type="helix" evidence="16">
    <location>
        <begin position="100"/>
        <end position="116"/>
    </location>
</feature>
<feature type="helix" evidence="16">
    <location>
        <begin position="132"/>
        <end position="134"/>
    </location>
</feature>
<feature type="strand" evidence="16">
    <location>
        <begin position="136"/>
        <end position="138"/>
    </location>
</feature>
<feature type="turn" evidence="16">
    <location>
        <begin position="139"/>
        <end position="142"/>
    </location>
</feature>
<feature type="strand" evidence="16">
    <location>
        <begin position="143"/>
        <end position="145"/>
    </location>
</feature>
<feature type="strand" evidence="16">
    <location>
        <begin position="151"/>
        <end position="161"/>
    </location>
</feature>
<feature type="strand" evidence="16">
    <location>
        <begin position="166"/>
        <end position="169"/>
    </location>
</feature>
<feature type="strand" evidence="16">
    <location>
        <begin position="178"/>
        <end position="188"/>
    </location>
</feature>
<feature type="helix" evidence="16">
    <location>
        <begin position="197"/>
        <end position="199"/>
    </location>
</feature>
<feature type="strand" evidence="16">
    <location>
        <begin position="208"/>
        <end position="215"/>
    </location>
</feature>
<feature type="helix" evidence="16">
    <location>
        <begin position="218"/>
        <end position="220"/>
    </location>
</feature>
<feature type="strand" evidence="16">
    <location>
        <begin position="222"/>
        <end position="230"/>
    </location>
</feature>
<feature type="strand" evidence="16">
    <location>
        <begin position="233"/>
        <end position="245"/>
    </location>
</feature>
<reference key="1">
    <citation type="journal article" date="2014" name="Mamm. Genome">
        <title>A transgenic insertion on mouse chromosome 17 inactivates a novel immunoglobulin superfamily gene potentially involved in sperm-egg fusion.</title>
        <authorList>
            <person name="Lorenzetti D."/>
            <person name="Poirier C."/>
            <person name="Zhao M."/>
            <person name="Overbeek P.A."/>
            <person name="Harrison W."/>
            <person name="Bishop C.E."/>
        </authorList>
    </citation>
    <scope>NUCLEOTIDE SEQUENCE [MRNA] (ISOFORM 1)</scope>
    <scope>TISSUE SPECIFICITY</scope>
    <scope>ALTERNATIVE SPLICING</scope>
    <source>
        <tissue>Testis</tissue>
    </source>
</reference>
<reference key="2">
    <citation type="journal article" date="2003" name="Genome Res.">
        <title>The secreted protein discovery initiative (SPDI), a large-scale effort to identify novel human secreted and transmembrane proteins: a bioinformatics assessment.</title>
        <authorList>
            <person name="Clark H.F."/>
            <person name="Gurney A.L."/>
            <person name="Abaya E."/>
            <person name="Baker K."/>
            <person name="Baldwin D.T."/>
            <person name="Brush J."/>
            <person name="Chen J."/>
            <person name="Chow B."/>
            <person name="Chui C."/>
            <person name="Crowley C."/>
            <person name="Currell B."/>
            <person name="Deuel B."/>
            <person name="Dowd P."/>
            <person name="Eaton D."/>
            <person name="Foster J.S."/>
            <person name="Grimaldi C."/>
            <person name="Gu Q."/>
            <person name="Hass P.E."/>
            <person name="Heldens S."/>
            <person name="Huang A."/>
            <person name="Kim H.S."/>
            <person name="Klimowski L."/>
            <person name="Jin Y."/>
            <person name="Johnson S."/>
            <person name="Lee J."/>
            <person name="Lewis L."/>
            <person name="Liao D."/>
            <person name="Mark M.R."/>
            <person name="Robbie E."/>
            <person name="Sanchez C."/>
            <person name="Schoenfeld J."/>
            <person name="Seshagiri S."/>
            <person name="Simmons L."/>
            <person name="Singh J."/>
            <person name="Smith V."/>
            <person name="Stinson J."/>
            <person name="Vagts A."/>
            <person name="Vandlen R.L."/>
            <person name="Watanabe C."/>
            <person name="Wieand D."/>
            <person name="Woods K."/>
            <person name="Xie M.-H."/>
            <person name="Yansura D.G."/>
            <person name="Yi S."/>
            <person name="Yu G."/>
            <person name="Yuan J."/>
            <person name="Zhang M."/>
            <person name="Zhang Z."/>
            <person name="Goddard A.D."/>
            <person name="Wood W.I."/>
            <person name="Godowski P.J."/>
            <person name="Gray A.M."/>
        </authorList>
    </citation>
    <scope>NUCLEOTIDE SEQUENCE [LARGE SCALE MRNA] (ISOFORM 2)</scope>
</reference>
<reference key="3">
    <citation type="journal article" date="2004" name="Nature">
        <title>The DNA sequence and biology of human chromosome 19.</title>
        <authorList>
            <person name="Grimwood J."/>
            <person name="Gordon L.A."/>
            <person name="Olsen A.S."/>
            <person name="Terry A."/>
            <person name="Schmutz J."/>
            <person name="Lamerdin J.E."/>
            <person name="Hellsten U."/>
            <person name="Goodstein D."/>
            <person name="Couronne O."/>
            <person name="Tran-Gyamfi M."/>
            <person name="Aerts A."/>
            <person name="Altherr M."/>
            <person name="Ashworth L."/>
            <person name="Bajorek E."/>
            <person name="Black S."/>
            <person name="Branscomb E."/>
            <person name="Caenepeel S."/>
            <person name="Carrano A.V."/>
            <person name="Caoile C."/>
            <person name="Chan Y.M."/>
            <person name="Christensen M."/>
            <person name="Cleland C.A."/>
            <person name="Copeland A."/>
            <person name="Dalin E."/>
            <person name="Dehal P."/>
            <person name="Denys M."/>
            <person name="Detter J.C."/>
            <person name="Escobar J."/>
            <person name="Flowers D."/>
            <person name="Fotopulos D."/>
            <person name="Garcia C."/>
            <person name="Georgescu A.M."/>
            <person name="Glavina T."/>
            <person name="Gomez M."/>
            <person name="Gonzales E."/>
            <person name="Groza M."/>
            <person name="Hammon N."/>
            <person name="Hawkins T."/>
            <person name="Haydu L."/>
            <person name="Ho I."/>
            <person name="Huang W."/>
            <person name="Israni S."/>
            <person name="Jett J."/>
            <person name="Kadner K."/>
            <person name="Kimball H."/>
            <person name="Kobayashi A."/>
            <person name="Larionov V."/>
            <person name="Leem S.-H."/>
            <person name="Lopez F."/>
            <person name="Lou Y."/>
            <person name="Lowry S."/>
            <person name="Malfatti S."/>
            <person name="Martinez D."/>
            <person name="McCready P.M."/>
            <person name="Medina C."/>
            <person name="Morgan J."/>
            <person name="Nelson K."/>
            <person name="Nolan M."/>
            <person name="Ovcharenko I."/>
            <person name="Pitluck S."/>
            <person name="Pollard M."/>
            <person name="Popkie A.P."/>
            <person name="Predki P."/>
            <person name="Quan G."/>
            <person name="Ramirez L."/>
            <person name="Rash S."/>
            <person name="Retterer J."/>
            <person name="Rodriguez A."/>
            <person name="Rogers S."/>
            <person name="Salamov A."/>
            <person name="Salazar A."/>
            <person name="She X."/>
            <person name="Smith D."/>
            <person name="Slezak T."/>
            <person name="Solovyev V."/>
            <person name="Thayer N."/>
            <person name="Tice H."/>
            <person name="Tsai M."/>
            <person name="Ustaszewska A."/>
            <person name="Vo N."/>
            <person name="Wagner M."/>
            <person name="Wheeler J."/>
            <person name="Wu K."/>
            <person name="Xie G."/>
            <person name="Yang J."/>
            <person name="Dubchak I."/>
            <person name="Furey T.S."/>
            <person name="DeJong P."/>
            <person name="Dickson M."/>
            <person name="Gordon D."/>
            <person name="Eichler E.E."/>
            <person name="Pennacchio L.A."/>
            <person name="Richardson P."/>
            <person name="Stubbs L."/>
            <person name="Rokhsar D.S."/>
            <person name="Myers R.M."/>
            <person name="Rubin E.M."/>
            <person name="Lucas S.M."/>
        </authorList>
    </citation>
    <scope>NUCLEOTIDE SEQUENCE [LARGE SCALE GENOMIC DNA]</scope>
</reference>
<reference key="4">
    <citation type="submission" date="2005-07" db="EMBL/GenBank/DDBJ databases">
        <authorList>
            <person name="Mural R.J."/>
            <person name="Istrail S."/>
            <person name="Sutton G.G."/>
            <person name="Florea L."/>
            <person name="Halpern A.L."/>
            <person name="Mobarry C.M."/>
            <person name="Lippert R."/>
            <person name="Walenz B."/>
            <person name="Shatkay H."/>
            <person name="Dew I."/>
            <person name="Miller J.R."/>
            <person name="Flanigan M.J."/>
            <person name="Edwards N.J."/>
            <person name="Bolanos R."/>
            <person name="Fasulo D."/>
            <person name="Halldorsson B.V."/>
            <person name="Hannenhalli S."/>
            <person name="Turner R."/>
            <person name="Yooseph S."/>
            <person name="Lu F."/>
            <person name="Nusskern D.R."/>
            <person name="Shue B.C."/>
            <person name="Zheng X.H."/>
            <person name="Zhong F."/>
            <person name="Delcher A.L."/>
            <person name="Huson D.H."/>
            <person name="Kravitz S.A."/>
            <person name="Mouchard L."/>
            <person name="Reinert K."/>
            <person name="Remington K.A."/>
            <person name="Clark A.G."/>
            <person name="Waterman M.S."/>
            <person name="Eichler E.E."/>
            <person name="Adams M.D."/>
            <person name="Hunkapiller M.W."/>
            <person name="Myers E.W."/>
            <person name="Venter J.C."/>
        </authorList>
    </citation>
    <scope>NUCLEOTIDE SEQUENCE [LARGE SCALE GENOMIC DNA]</scope>
</reference>
<reference key="5">
    <citation type="journal article" date="2004" name="Genome Res.">
        <title>The status, quality, and expansion of the NIH full-length cDNA project: the Mammalian Gene Collection (MGC).</title>
        <authorList>
            <consortium name="The MGC Project Team"/>
        </authorList>
    </citation>
    <scope>NUCLEOTIDE SEQUENCE [LARGE SCALE MRNA] (ISOFORM 3)</scope>
</reference>
<reference key="6">
    <citation type="journal article" date="2020" name="Sci. Rep.">
        <title>Sperm SPACA6 protein is required for mammalian Sperm-Egg Adhesion/Fusion.</title>
        <authorList>
            <person name="Barbaux S."/>
            <person name="Ialy-Radio C."/>
            <person name="Chalbi M."/>
            <person name="Dybal E."/>
            <person name="Homps-Legrand M."/>
            <person name="Do Cruzeiro M."/>
            <person name="Vaiman D."/>
            <person name="Wolf J.P."/>
            <person name="Ziyyat A."/>
        </authorList>
    </citation>
    <scope>SUBCELLULAR LOCATION</scope>
    <scope>TISSUE SPECIFICITY</scope>
</reference>
<reference key="7">
    <citation type="journal article" date="2024" name="Cell">
        <title>A conserved fertilization complex bridges sperm and egg in vertebrates.</title>
        <authorList>
            <person name="Deneke V.E."/>
            <person name="Blaha A."/>
            <person name="Lu Y."/>
            <person name="Suwita J.P."/>
            <person name="Draper J.M."/>
            <person name="Phan C.S."/>
            <person name="Panser K."/>
            <person name="Schleiffer A."/>
            <person name="Jacob L."/>
            <person name="Humer T."/>
            <person name="Stejskal K."/>
            <person name="Krssakova G."/>
            <person name="Roitinger E."/>
            <person name="Handler D."/>
            <person name="Kamoshita M."/>
            <person name="Vance T.D.R."/>
            <person name="Wang X."/>
            <person name="Surm J.M."/>
            <person name="Moran Y."/>
            <person name="Lee J.E."/>
            <person name="Ikawa M."/>
            <person name="Pauli A."/>
        </authorList>
    </citation>
    <scope>INTERACTION WITH IZUMO1 AND TMEM81</scope>
</reference>
<reference evidence="15" key="8">
    <citation type="journal article" date="2022" name="Commun. Biol.">
        <title>SPACA6 ectodomain structure reveals a conserved superfamily of gamete fusion-associated proteins.</title>
        <authorList>
            <person name="Vance T.D.R."/>
            <person name="Yip P."/>
            <person name="Jimenez E."/>
            <person name="Li S."/>
            <person name="Gawol D."/>
            <person name="Byrnes J."/>
            <person name="Uson I."/>
            <person name="Ziyyat A."/>
            <person name="Lee J.E."/>
        </authorList>
    </citation>
    <scope>X-RAY CRYSTALLOGRAPHY (2.25 ANGSTROMS) OF 27-246</scope>
    <scope>DOMAIN</scope>
    <scope>DISULFIDE BONDS</scope>
</reference>
<gene>
    <name evidence="14" type="primary">SPACA6</name>
    <name type="synonym">SPACA6P</name>
    <name evidence="9" type="ORF">UNQ2487/PRO5774</name>
</gene>